<gene>
    <name evidence="1" type="primary">era</name>
    <name type="ordered locus">Mjls_3463</name>
</gene>
<feature type="chain" id="PRO_1000079712" description="GTPase Era">
    <location>
        <begin position="1"/>
        <end position="299"/>
    </location>
</feature>
<feature type="domain" description="Era-type G" evidence="2">
    <location>
        <begin position="5"/>
        <end position="175"/>
    </location>
</feature>
<feature type="domain" description="KH type-2" evidence="1">
    <location>
        <begin position="206"/>
        <end position="285"/>
    </location>
</feature>
<feature type="region of interest" description="G1" evidence="2">
    <location>
        <begin position="13"/>
        <end position="20"/>
    </location>
</feature>
<feature type="region of interest" description="G2" evidence="2">
    <location>
        <begin position="39"/>
        <end position="43"/>
    </location>
</feature>
<feature type="region of interest" description="G3" evidence="2">
    <location>
        <begin position="60"/>
        <end position="63"/>
    </location>
</feature>
<feature type="region of interest" description="G4" evidence="2">
    <location>
        <begin position="124"/>
        <end position="127"/>
    </location>
</feature>
<feature type="region of interest" description="G5" evidence="2">
    <location>
        <begin position="154"/>
        <end position="156"/>
    </location>
</feature>
<feature type="binding site" evidence="1">
    <location>
        <begin position="13"/>
        <end position="20"/>
    </location>
    <ligand>
        <name>GTP</name>
        <dbReference type="ChEBI" id="CHEBI:37565"/>
    </ligand>
</feature>
<feature type="binding site" evidence="1">
    <location>
        <begin position="60"/>
        <end position="64"/>
    </location>
    <ligand>
        <name>GTP</name>
        <dbReference type="ChEBI" id="CHEBI:37565"/>
    </ligand>
</feature>
<feature type="binding site" evidence="1">
    <location>
        <begin position="124"/>
        <end position="127"/>
    </location>
    <ligand>
        <name>GTP</name>
        <dbReference type="ChEBI" id="CHEBI:37565"/>
    </ligand>
</feature>
<organism>
    <name type="scientific">Mycobacterium sp. (strain JLS)</name>
    <dbReference type="NCBI Taxonomy" id="164757"/>
    <lineage>
        <taxon>Bacteria</taxon>
        <taxon>Bacillati</taxon>
        <taxon>Actinomycetota</taxon>
        <taxon>Actinomycetes</taxon>
        <taxon>Mycobacteriales</taxon>
        <taxon>Mycobacteriaceae</taxon>
        <taxon>Mycobacterium</taxon>
    </lineage>
</organism>
<comment type="function">
    <text evidence="1">Exhibits GTPase activity. Binds RNA but is probably not involved in ribosome assembly in mycobacteria.</text>
</comment>
<comment type="subunit">
    <text evidence="1">Monomer.</text>
</comment>
<comment type="subcellular location">
    <subcellularLocation>
        <location evidence="1">Cell envelope</location>
    </subcellularLocation>
    <subcellularLocation>
        <location evidence="1">Secreted</location>
        <location evidence="1">Cell wall</location>
    </subcellularLocation>
</comment>
<comment type="similarity">
    <text evidence="1">Belongs to the TRAFAC class TrmE-Era-EngA-EngB-Septin-like GTPase superfamily. Era GTPase family.</text>
</comment>
<reference key="1">
    <citation type="submission" date="2007-02" db="EMBL/GenBank/DDBJ databases">
        <title>Complete sequence of Mycobacterium sp. JLS.</title>
        <authorList>
            <consortium name="US DOE Joint Genome Institute"/>
            <person name="Copeland A."/>
            <person name="Lucas S."/>
            <person name="Lapidus A."/>
            <person name="Barry K."/>
            <person name="Detter J.C."/>
            <person name="Glavina del Rio T."/>
            <person name="Hammon N."/>
            <person name="Israni S."/>
            <person name="Dalin E."/>
            <person name="Tice H."/>
            <person name="Pitluck S."/>
            <person name="Chain P."/>
            <person name="Malfatti S."/>
            <person name="Shin M."/>
            <person name="Vergez L."/>
            <person name="Schmutz J."/>
            <person name="Larimer F."/>
            <person name="Land M."/>
            <person name="Hauser L."/>
            <person name="Kyrpides N."/>
            <person name="Mikhailova N."/>
            <person name="Miller C.D."/>
            <person name="Anderson A.J."/>
            <person name="Sims R.C."/>
            <person name="Richardson P."/>
        </authorList>
    </citation>
    <scope>NUCLEOTIDE SEQUENCE [LARGE SCALE GENOMIC DNA]</scope>
    <source>
        <strain>JLS</strain>
    </source>
</reference>
<sequence length="299" mass="32848">MSEFRSGFVCFVGRPNTGKSTLTNALVGTKVAITSNRPQTTRHTIRGIVHRDEFQIILVDTPGLHRPRTLLGQRLNDLVKTTYSEVDVIGLCIPADEAIGPGDRWIHEQIRAVAPRTTLVVIVTKIDKVPKDRVAAQLMAVSELIGPDAEIVPVSATTGEQLDVLTDVLAGKLPPGPAFYPDGELTDEPEETLMAELIREAALEGVRDELPHSLAVVIDEVSPREDRDDLIDVHAILYVERDSQKGIVIGKGGARLREVGTAARLQIEKLLGTKVYLDLRVKIAKNWQRDPKQLGRLGF</sequence>
<proteinExistence type="inferred from homology"/>
<accession>A3Q264</accession>
<keyword id="KW-0134">Cell wall</keyword>
<keyword id="KW-0342">GTP-binding</keyword>
<keyword id="KW-0547">Nucleotide-binding</keyword>
<keyword id="KW-0694">RNA-binding</keyword>
<keyword id="KW-0964">Secreted</keyword>
<name>ERA_MYCSJ</name>
<protein>
    <recommendedName>
        <fullName evidence="1">GTPase Era</fullName>
    </recommendedName>
</protein>
<evidence type="ECO:0000255" key="1">
    <source>
        <dbReference type="HAMAP-Rule" id="MF_00367"/>
    </source>
</evidence>
<evidence type="ECO:0000255" key="2">
    <source>
        <dbReference type="PROSITE-ProRule" id="PRU01050"/>
    </source>
</evidence>
<dbReference type="EMBL" id="CP000580">
    <property type="protein sequence ID" value="ABN99241.1"/>
    <property type="molecule type" value="Genomic_DNA"/>
</dbReference>
<dbReference type="SMR" id="A3Q264"/>
<dbReference type="KEGG" id="mjl:Mjls_3463"/>
<dbReference type="HOGENOM" id="CLU_038009_0_2_11"/>
<dbReference type="BioCyc" id="MSP164757:G1G8C-3493-MONOMER"/>
<dbReference type="GO" id="GO:0030313">
    <property type="term" value="C:cell envelope"/>
    <property type="evidence" value="ECO:0007669"/>
    <property type="project" value="UniProtKB-SubCell"/>
</dbReference>
<dbReference type="GO" id="GO:0005829">
    <property type="term" value="C:cytosol"/>
    <property type="evidence" value="ECO:0007669"/>
    <property type="project" value="TreeGrafter"/>
</dbReference>
<dbReference type="GO" id="GO:0005576">
    <property type="term" value="C:extracellular region"/>
    <property type="evidence" value="ECO:0007669"/>
    <property type="project" value="UniProtKB-KW"/>
</dbReference>
<dbReference type="GO" id="GO:0005525">
    <property type="term" value="F:GTP binding"/>
    <property type="evidence" value="ECO:0007669"/>
    <property type="project" value="UniProtKB-UniRule"/>
</dbReference>
<dbReference type="GO" id="GO:0003924">
    <property type="term" value="F:GTPase activity"/>
    <property type="evidence" value="ECO:0007669"/>
    <property type="project" value="UniProtKB-UniRule"/>
</dbReference>
<dbReference type="GO" id="GO:0043024">
    <property type="term" value="F:ribosomal small subunit binding"/>
    <property type="evidence" value="ECO:0007669"/>
    <property type="project" value="TreeGrafter"/>
</dbReference>
<dbReference type="GO" id="GO:0019843">
    <property type="term" value="F:rRNA binding"/>
    <property type="evidence" value="ECO:0007669"/>
    <property type="project" value="TreeGrafter"/>
</dbReference>
<dbReference type="GO" id="GO:0000028">
    <property type="term" value="P:ribosomal small subunit assembly"/>
    <property type="evidence" value="ECO:0007669"/>
    <property type="project" value="TreeGrafter"/>
</dbReference>
<dbReference type="CDD" id="cd04163">
    <property type="entry name" value="Era"/>
    <property type="match status" value="1"/>
</dbReference>
<dbReference type="CDD" id="cd22534">
    <property type="entry name" value="KH-II_Era"/>
    <property type="match status" value="1"/>
</dbReference>
<dbReference type="FunFam" id="3.30.300.20:FF:000003">
    <property type="entry name" value="GTPase Era"/>
    <property type="match status" value="1"/>
</dbReference>
<dbReference type="FunFam" id="3.40.50.300:FF:000094">
    <property type="entry name" value="GTPase Era"/>
    <property type="match status" value="1"/>
</dbReference>
<dbReference type="Gene3D" id="3.30.300.20">
    <property type="match status" value="1"/>
</dbReference>
<dbReference type="Gene3D" id="3.40.50.300">
    <property type="entry name" value="P-loop containing nucleotide triphosphate hydrolases"/>
    <property type="match status" value="1"/>
</dbReference>
<dbReference type="HAMAP" id="MF_00367">
    <property type="entry name" value="GTPase_Era"/>
    <property type="match status" value="1"/>
</dbReference>
<dbReference type="InterPro" id="IPR030388">
    <property type="entry name" value="G_ERA_dom"/>
</dbReference>
<dbReference type="InterPro" id="IPR006073">
    <property type="entry name" value="GTP-bd"/>
</dbReference>
<dbReference type="InterPro" id="IPR005662">
    <property type="entry name" value="GTPase_Era-like"/>
</dbReference>
<dbReference type="InterPro" id="IPR015946">
    <property type="entry name" value="KH_dom-like_a/b"/>
</dbReference>
<dbReference type="InterPro" id="IPR004044">
    <property type="entry name" value="KH_dom_type_2"/>
</dbReference>
<dbReference type="InterPro" id="IPR009019">
    <property type="entry name" value="KH_sf_prok-type"/>
</dbReference>
<dbReference type="InterPro" id="IPR027417">
    <property type="entry name" value="P-loop_NTPase"/>
</dbReference>
<dbReference type="InterPro" id="IPR005225">
    <property type="entry name" value="Small_GTP-bd"/>
</dbReference>
<dbReference type="NCBIfam" id="TIGR00436">
    <property type="entry name" value="era"/>
    <property type="match status" value="1"/>
</dbReference>
<dbReference type="NCBIfam" id="NF000908">
    <property type="entry name" value="PRK00089.1"/>
    <property type="match status" value="1"/>
</dbReference>
<dbReference type="NCBIfam" id="TIGR00231">
    <property type="entry name" value="small_GTP"/>
    <property type="match status" value="1"/>
</dbReference>
<dbReference type="PANTHER" id="PTHR42698">
    <property type="entry name" value="GTPASE ERA"/>
    <property type="match status" value="1"/>
</dbReference>
<dbReference type="PANTHER" id="PTHR42698:SF1">
    <property type="entry name" value="GTPASE ERA, MITOCHONDRIAL"/>
    <property type="match status" value="1"/>
</dbReference>
<dbReference type="Pfam" id="PF07650">
    <property type="entry name" value="KH_2"/>
    <property type="match status" value="1"/>
</dbReference>
<dbReference type="Pfam" id="PF01926">
    <property type="entry name" value="MMR_HSR1"/>
    <property type="match status" value="1"/>
</dbReference>
<dbReference type="PRINTS" id="PR00326">
    <property type="entry name" value="GTP1OBG"/>
</dbReference>
<dbReference type="SUPFAM" id="SSF52540">
    <property type="entry name" value="P-loop containing nucleoside triphosphate hydrolases"/>
    <property type="match status" value="1"/>
</dbReference>
<dbReference type="SUPFAM" id="SSF54814">
    <property type="entry name" value="Prokaryotic type KH domain (KH-domain type II)"/>
    <property type="match status" value="1"/>
</dbReference>
<dbReference type="PROSITE" id="PS51713">
    <property type="entry name" value="G_ERA"/>
    <property type="match status" value="1"/>
</dbReference>
<dbReference type="PROSITE" id="PS50823">
    <property type="entry name" value="KH_TYPE_2"/>
    <property type="match status" value="1"/>
</dbReference>